<dbReference type="EMBL" id="CP001144">
    <property type="protein sequence ID" value="ACH76873.1"/>
    <property type="molecule type" value="Genomic_DNA"/>
</dbReference>
<dbReference type="RefSeq" id="WP_000301869.1">
    <property type="nucleotide sequence ID" value="NC_011205.1"/>
</dbReference>
<dbReference type="SMR" id="B5FJL1"/>
<dbReference type="GeneID" id="97393170"/>
<dbReference type="KEGG" id="sed:SeD_A3804"/>
<dbReference type="HOGENOM" id="CLU_036235_2_1_6"/>
<dbReference type="Proteomes" id="UP000008322">
    <property type="component" value="Chromosome"/>
</dbReference>
<dbReference type="GO" id="GO:0005829">
    <property type="term" value="C:cytosol"/>
    <property type="evidence" value="ECO:0007669"/>
    <property type="project" value="UniProtKB-ARBA"/>
</dbReference>
<dbReference type="GO" id="GO:0015934">
    <property type="term" value="C:large ribosomal subunit"/>
    <property type="evidence" value="ECO:0007669"/>
    <property type="project" value="InterPro"/>
</dbReference>
<dbReference type="GO" id="GO:0019843">
    <property type="term" value="F:rRNA binding"/>
    <property type="evidence" value="ECO:0007669"/>
    <property type="project" value="UniProtKB-UniRule"/>
</dbReference>
<dbReference type="GO" id="GO:0003735">
    <property type="term" value="F:structural constituent of ribosome"/>
    <property type="evidence" value="ECO:0007669"/>
    <property type="project" value="InterPro"/>
</dbReference>
<dbReference type="GO" id="GO:0016740">
    <property type="term" value="F:transferase activity"/>
    <property type="evidence" value="ECO:0007669"/>
    <property type="project" value="InterPro"/>
</dbReference>
<dbReference type="GO" id="GO:0002181">
    <property type="term" value="P:cytoplasmic translation"/>
    <property type="evidence" value="ECO:0007669"/>
    <property type="project" value="TreeGrafter"/>
</dbReference>
<dbReference type="FunFam" id="2.30.30.30:FF:000001">
    <property type="entry name" value="50S ribosomal protein L2"/>
    <property type="match status" value="1"/>
</dbReference>
<dbReference type="FunFam" id="2.40.50.140:FF:000003">
    <property type="entry name" value="50S ribosomal protein L2"/>
    <property type="match status" value="1"/>
</dbReference>
<dbReference type="FunFam" id="4.10.950.10:FF:000001">
    <property type="entry name" value="50S ribosomal protein L2"/>
    <property type="match status" value="1"/>
</dbReference>
<dbReference type="Gene3D" id="2.30.30.30">
    <property type="match status" value="1"/>
</dbReference>
<dbReference type="Gene3D" id="2.40.50.140">
    <property type="entry name" value="Nucleic acid-binding proteins"/>
    <property type="match status" value="1"/>
</dbReference>
<dbReference type="Gene3D" id="4.10.950.10">
    <property type="entry name" value="Ribosomal protein L2, domain 3"/>
    <property type="match status" value="1"/>
</dbReference>
<dbReference type="HAMAP" id="MF_01320_B">
    <property type="entry name" value="Ribosomal_uL2_B"/>
    <property type="match status" value="1"/>
</dbReference>
<dbReference type="InterPro" id="IPR012340">
    <property type="entry name" value="NA-bd_OB-fold"/>
</dbReference>
<dbReference type="InterPro" id="IPR014722">
    <property type="entry name" value="Rib_uL2_dom2"/>
</dbReference>
<dbReference type="InterPro" id="IPR002171">
    <property type="entry name" value="Ribosomal_uL2"/>
</dbReference>
<dbReference type="InterPro" id="IPR005880">
    <property type="entry name" value="Ribosomal_uL2_bac/org-type"/>
</dbReference>
<dbReference type="InterPro" id="IPR022669">
    <property type="entry name" value="Ribosomal_uL2_C"/>
</dbReference>
<dbReference type="InterPro" id="IPR022671">
    <property type="entry name" value="Ribosomal_uL2_CS"/>
</dbReference>
<dbReference type="InterPro" id="IPR014726">
    <property type="entry name" value="Ribosomal_uL2_dom3"/>
</dbReference>
<dbReference type="InterPro" id="IPR022666">
    <property type="entry name" value="Ribosomal_uL2_RNA-bd_dom"/>
</dbReference>
<dbReference type="InterPro" id="IPR008991">
    <property type="entry name" value="Translation_prot_SH3-like_sf"/>
</dbReference>
<dbReference type="NCBIfam" id="TIGR01171">
    <property type="entry name" value="rplB_bact"/>
    <property type="match status" value="1"/>
</dbReference>
<dbReference type="PANTHER" id="PTHR13691:SF5">
    <property type="entry name" value="LARGE RIBOSOMAL SUBUNIT PROTEIN UL2M"/>
    <property type="match status" value="1"/>
</dbReference>
<dbReference type="PANTHER" id="PTHR13691">
    <property type="entry name" value="RIBOSOMAL PROTEIN L2"/>
    <property type="match status" value="1"/>
</dbReference>
<dbReference type="Pfam" id="PF00181">
    <property type="entry name" value="Ribosomal_L2"/>
    <property type="match status" value="1"/>
</dbReference>
<dbReference type="Pfam" id="PF03947">
    <property type="entry name" value="Ribosomal_L2_C"/>
    <property type="match status" value="1"/>
</dbReference>
<dbReference type="PIRSF" id="PIRSF002158">
    <property type="entry name" value="Ribosomal_L2"/>
    <property type="match status" value="1"/>
</dbReference>
<dbReference type="SMART" id="SM01383">
    <property type="entry name" value="Ribosomal_L2"/>
    <property type="match status" value="1"/>
</dbReference>
<dbReference type="SMART" id="SM01382">
    <property type="entry name" value="Ribosomal_L2_C"/>
    <property type="match status" value="1"/>
</dbReference>
<dbReference type="SUPFAM" id="SSF50249">
    <property type="entry name" value="Nucleic acid-binding proteins"/>
    <property type="match status" value="1"/>
</dbReference>
<dbReference type="SUPFAM" id="SSF50104">
    <property type="entry name" value="Translation proteins SH3-like domain"/>
    <property type="match status" value="1"/>
</dbReference>
<dbReference type="PROSITE" id="PS00467">
    <property type="entry name" value="RIBOSOMAL_L2"/>
    <property type="match status" value="1"/>
</dbReference>
<name>RL2_SALDC</name>
<evidence type="ECO:0000255" key="1">
    <source>
        <dbReference type="HAMAP-Rule" id="MF_01320"/>
    </source>
</evidence>
<evidence type="ECO:0000256" key="2">
    <source>
        <dbReference type="SAM" id="MobiDB-lite"/>
    </source>
</evidence>
<evidence type="ECO:0000305" key="3"/>
<organism>
    <name type="scientific">Salmonella dublin (strain CT_02021853)</name>
    <dbReference type="NCBI Taxonomy" id="439851"/>
    <lineage>
        <taxon>Bacteria</taxon>
        <taxon>Pseudomonadati</taxon>
        <taxon>Pseudomonadota</taxon>
        <taxon>Gammaproteobacteria</taxon>
        <taxon>Enterobacterales</taxon>
        <taxon>Enterobacteriaceae</taxon>
        <taxon>Salmonella</taxon>
    </lineage>
</organism>
<accession>B5FJL1</accession>
<proteinExistence type="inferred from homology"/>
<comment type="function">
    <text evidence="1">One of the primary rRNA binding proteins. Required for association of the 30S and 50S subunits to form the 70S ribosome, for tRNA binding and peptide bond formation. It has been suggested to have peptidyltransferase activity; this is somewhat controversial. Makes several contacts with the 16S rRNA in the 70S ribosome.</text>
</comment>
<comment type="subunit">
    <text evidence="1">Part of the 50S ribosomal subunit. Forms a bridge to the 30S subunit in the 70S ribosome.</text>
</comment>
<comment type="similarity">
    <text evidence="1">Belongs to the universal ribosomal protein uL2 family.</text>
</comment>
<feature type="chain" id="PRO_1000141607" description="Large ribosomal subunit protein uL2">
    <location>
        <begin position="1"/>
        <end position="273"/>
    </location>
</feature>
<feature type="region of interest" description="Disordered" evidence="2">
    <location>
        <begin position="28"/>
        <end position="53"/>
    </location>
</feature>
<feature type="region of interest" description="Disordered" evidence="2">
    <location>
        <begin position="221"/>
        <end position="273"/>
    </location>
</feature>
<feature type="compositionally biased region" description="Low complexity" evidence="2">
    <location>
        <begin position="39"/>
        <end position="48"/>
    </location>
</feature>
<keyword id="KW-0687">Ribonucleoprotein</keyword>
<keyword id="KW-0689">Ribosomal protein</keyword>
<keyword id="KW-0694">RNA-binding</keyword>
<keyword id="KW-0699">rRNA-binding</keyword>
<protein>
    <recommendedName>
        <fullName evidence="1">Large ribosomal subunit protein uL2</fullName>
    </recommendedName>
    <alternativeName>
        <fullName evidence="3">50S ribosomal protein L2</fullName>
    </alternativeName>
</protein>
<gene>
    <name evidence="1" type="primary">rplB</name>
    <name type="ordered locus">SeD_A3804</name>
</gene>
<sequence>MAVVKCKPTSPGRRHVVKVVNPELHKGKPFAPLVEKNSKSGGRNNNGRITTRHIGGGHKQAYRIVDFKRNKDGIPAVVERLEYDPNRSANIALVLYKDGERRYILAPKGLKAGDQIQSGVDAAIKAGNTLPMRNIPVGSTVHNVEMKPGKGGQLARSAGTYVQIVARDGAYVTLRLRSGEMRKVEADCRATLGEVGNAEHMLRVLGKAGAARWRGVRPTVRGTAMNPVDHPHGGGEGRNFGKHPVTPWGVQTKGKKTRSNKRTDKFIVRRRSK</sequence>
<reference key="1">
    <citation type="journal article" date="2011" name="J. Bacteriol.">
        <title>Comparative genomics of 28 Salmonella enterica isolates: evidence for CRISPR-mediated adaptive sublineage evolution.</title>
        <authorList>
            <person name="Fricke W.F."/>
            <person name="Mammel M.K."/>
            <person name="McDermott P.F."/>
            <person name="Tartera C."/>
            <person name="White D.G."/>
            <person name="Leclerc J.E."/>
            <person name="Ravel J."/>
            <person name="Cebula T.A."/>
        </authorList>
    </citation>
    <scope>NUCLEOTIDE SEQUENCE [LARGE SCALE GENOMIC DNA]</scope>
    <source>
        <strain>CT_02021853</strain>
    </source>
</reference>